<reference key="1">
    <citation type="journal article" date="2008" name="Proc. Natl. Acad. Sci. U.S.A.">
        <title>Niche adaptation and genome expansion in the chlorophyll d-producing cyanobacterium Acaryochloris marina.</title>
        <authorList>
            <person name="Swingley W.D."/>
            <person name="Chen M."/>
            <person name="Cheung P.C."/>
            <person name="Conrad A.L."/>
            <person name="Dejesa L.C."/>
            <person name="Hao J."/>
            <person name="Honchak B.M."/>
            <person name="Karbach L.E."/>
            <person name="Kurdoglu A."/>
            <person name="Lahiri S."/>
            <person name="Mastrian S.D."/>
            <person name="Miyashita H."/>
            <person name="Page L."/>
            <person name="Ramakrishna P."/>
            <person name="Satoh S."/>
            <person name="Sattley W.M."/>
            <person name="Shimada Y."/>
            <person name="Taylor H.L."/>
            <person name="Tomo T."/>
            <person name="Tsuchiya T."/>
            <person name="Wang Z.T."/>
            <person name="Raymond J."/>
            <person name="Mimuro M."/>
            <person name="Blankenship R.E."/>
            <person name="Touchman J.W."/>
        </authorList>
    </citation>
    <scope>NUCLEOTIDE SEQUENCE [LARGE SCALE GENOMIC DNA]</scope>
    <source>
        <strain>MBIC 11017</strain>
    </source>
</reference>
<dbReference type="EC" id="2.7.7.6" evidence="1"/>
<dbReference type="EMBL" id="CP000828">
    <property type="protein sequence ID" value="ABW27277.1"/>
    <property type="molecule type" value="Genomic_DNA"/>
</dbReference>
<dbReference type="RefSeq" id="WP_010481519.1">
    <property type="nucleotide sequence ID" value="NC_009925.1"/>
</dbReference>
<dbReference type="SMR" id="B0C118"/>
<dbReference type="STRING" id="329726.AM1_2264"/>
<dbReference type="KEGG" id="amr:AM1_2264"/>
<dbReference type="eggNOG" id="ENOG5032RMS">
    <property type="taxonomic scope" value="Bacteria"/>
</dbReference>
<dbReference type="HOGENOM" id="CLU_175526_0_0_3"/>
<dbReference type="OrthoDB" id="463386at2"/>
<dbReference type="Proteomes" id="UP000000268">
    <property type="component" value="Chromosome"/>
</dbReference>
<dbReference type="GO" id="GO:0000428">
    <property type="term" value="C:DNA-directed RNA polymerase complex"/>
    <property type="evidence" value="ECO:0007669"/>
    <property type="project" value="UniProtKB-KW"/>
</dbReference>
<dbReference type="GO" id="GO:0003677">
    <property type="term" value="F:DNA binding"/>
    <property type="evidence" value="ECO:0007669"/>
    <property type="project" value="UniProtKB-UniRule"/>
</dbReference>
<dbReference type="GO" id="GO:0003899">
    <property type="term" value="F:DNA-directed RNA polymerase activity"/>
    <property type="evidence" value="ECO:0007669"/>
    <property type="project" value="UniProtKB-UniRule"/>
</dbReference>
<dbReference type="GO" id="GO:0006351">
    <property type="term" value="P:DNA-templated transcription"/>
    <property type="evidence" value="ECO:0007669"/>
    <property type="project" value="UniProtKB-UniRule"/>
</dbReference>
<dbReference type="HAMAP" id="MF_00366">
    <property type="entry name" value="RNApol_bact_RpoZ"/>
    <property type="match status" value="1"/>
</dbReference>
<dbReference type="InterPro" id="IPR003716">
    <property type="entry name" value="DNA-dir_RNA_pol_omega"/>
</dbReference>
<dbReference type="InterPro" id="IPR006110">
    <property type="entry name" value="Pol_omega/Rpo6/RPB6"/>
</dbReference>
<dbReference type="InterPro" id="IPR036161">
    <property type="entry name" value="RPB6/omega-like_sf"/>
</dbReference>
<dbReference type="NCBIfam" id="NF001574">
    <property type="entry name" value="PRK00392.2-5"/>
    <property type="match status" value="1"/>
</dbReference>
<dbReference type="Pfam" id="PF01192">
    <property type="entry name" value="RNA_pol_Rpb6"/>
    <property type="match status" value="1"/>
</dbReference>
<dbReference type="SUPFAM" id="SSF63562">
    <property type="entry name" value="RPB6/omega subunit-like"/>
    <property type="match status" value="1"/>
</dbReference>
<accession>B0C118</accession>
<organism>
    <name type="scientific">Acaryochloris marina (strain MBIC 11017)</name>
    <dbReference type="NCBI Taxonomy" id="329726"/>
    <lineage>
        <taxon>Bacteria</taxon>
        <taxon>Bacillati</taxon>
        <taxon>Cyanobacteriota</taxon>
        <taxon>Cyanophyceae</taxon>
        <taxon>Acaryochloridales</taxon>
        <taxon>Acaryochloridaceae</taxon>
        <taxon>Acaryochloris</taxon>
    </lineage>
</organism>
<proteinExistence type="inferred from homology"/>
<keyword id="KW-0240">DNA-directed RNA polymerase</keyword>
<keyword id="KW-0548">Nucleotidyltransferase</keyword>
<keyword id="KW-1185">Reference proteome</keyword>
<keyword id="KW-0804">Transcription</keyword>
<keyword id="KW-0808">Transferase</keyword>
<comment type="function">
    <text evidence="1">Promotes RNA polymerase assembly. Latches the N- and C-terminal regions of the beta' subunit thereby facilitating its interaction with the beta and alpha subunits.</text>
</comment>
<comment type="catalytic activity">
    <reaction evidence="1">
        <text>RNA(n) + a ribonucleoside 5'-triphosphate = RNA(n+1) + diphosphate</text>
        <dbReference type="Rhea" id="RHEA:21248"/>
        <dbReference type="Rhea" id="RHEA-COMP:14527"/>
        <dbReference type="Rhea" id="RHEA-COMP:17342"/>
        <dbReference type="ChEBI" id="CHEBI:33019"/>
        <dbReference type="ChEBI" id="CHEBI:61557"/>
        <dbReference type="ChEBI" id="CHEBI:140395"/>
        <dbReference type="EC" id="2.7.7.6"/>
    </reaction>
</comment>
<comment type="subunit">
    <text evidence="1">In cyanobacteria the RNAP catalytic core is composed of 2 alpha, 1 beta, 1 beta', 1 gamma and 1 omega subunit. When a sigma factor is associated with the core the holoenzyme is formed, which can initiate transcription.</text>
</comment>
<comment type="similarity">
    <text evidence="1">Belongs to the RNA polymerase subunit omega family.</text>
</comment>
<evidence type="ECO:0000255" key="1">
    <source>
        <dbReference type="HAMAP-Rule" id="MF_00366"/>
    </source>
</evidence>
<sequence>MSKRPTIDTTHIMRRAEELISASSNRYRITVQVANRAKKRRRRENLEDFEDAGMKSVMQAIIEMSDELTQPEIIGE</sequence>
<name>RPOZ_ACAM1</name>
<feature type="chain" id="PRO_1000079612" description="DNA-directed RNA polymerase subunit omega">
    <location>
        <begin position="1"/>
        <end position="76"/>
    </location>
</feature>
<gene>
    <name evidence="1" type="primary">rpoZ</name>
    <name type="ordered locus">AM1_2264</name>
</gene>
<protein>
    <recommendedName>
        <fullName evidence="1">DNA-directed RNA polymerase subunit omega</fullName>
        <shortName evidence="1">RNAP omega subunit</shortName>
        <ecNumber evidence="1">2.7.7.6</ecNumber>
    </recommendedName>
    <alternativeName>
        <fullName evidence="1">RNA polymerase omega subunit</fullName>
    </alternativeName>
    <alternativeName>
        <fullName evidence="1">Transcriptase subunit omega</fullName>
    </alternativeName>
</protein>